<accession>Q61062</accession>
<accession>G5E820</accession>
<protein>
    <recommendedName>
        <fullName>Segment polarity protein dishevelled homolog DVL-3</fullName>
        <shortName>Dishevelled-3</shortName>
    </recommendedName>
    <alternativeName>
        <fullName>DSH homolog 3</fullName>
    </alternativeName>
</protein>
<reference key="1">
    <citation type="journal article" date="1996" name="Dev. Dyn.">
        <title>Isolation and characterization of mouse dishevelled-3.</title>
        <authorList>
            <person name="Tsang M."/>
            <person name="Lijam N."/>
            <person name="Yang Y."/>
            <person name="Beier D.R."/>
            <person name="Wynshaw-Boris A."/>
            <person name="Sussman D.J."/>
        </authorList>
    </citation>
    <scope>NUCLEOTIDE SEQUENCE [MRNA]</scope>
    <source>
        <strain>BALB/cJ</strain>
        <tissue>Brain</tissue>
    </source>
</reference>
<reference key="2">
    <citation type="journal article" date="2009" name="PLoS Biol.">
        <title>Lineage-specific biology revealed by a finished genome assembly of the mouse.</title>
        <authorList>
            <person name="Church D.M."/>
            <person name="Goodstadt L."/>
            <person name="Hillier L.W."/>
            <person name="Zody M.C."/>
            <person name="Goldstein S."/>
            <person name="She X."/>
            <person name="Bult C.J."/>
            <person name="Agarwala R."/>
            <person name="Cherry J.L."/>
            <person name="DiCuccio M."/>
            <person name="Hlavina W."/>
            <person name="Kapustin Y."/>
            <person name="Meric P."/>
            <person name="Maglott D."/>
            <person name="Birtle Z."/>
            <person name="Marques A.C."/>
            <person name="Graves T."/>
            <person name="Zhou S."/>
            <person name="Teague B."/>
            <person name="Potamousis K."/>
            <person name="Churas C."/>
            <person name="Place M."/>
            <person name="Herschleb J."/>
            <person name="Runnheim R."/>
            <person name="Forrest D."/>
            <person name="Amos-Landgraf J."/>
            <person name="Schwartz D.C."/>
            <person name="Cheng Z."/>
            <person name="Lindblad-Toh K."/>
            <person name="Eichler E.E."/>
            <person name="Ponting C.P."/>
        </authorList>
    </citation>
    <scope>NUCLEOTIDE SEQUENCE [LARGE SCALE GENOMIC DNA]</scope>
    <source>
        <strain>C57BL/6J</strain>
    </source>
</reference>
<reference key="3">
    <citation type="submission" date="2005-07" db="EMBL/GenBank/DDBJ databases">
        <authorList>
            <person name="Mural R.J."/>
            <person name="Adams M.D."/>
            <person name="Myers E.W."/>
            <person name="Smith H.O."/>
            <person name="Venter J.C."/>
        </authorList>
    </citation>
    <scope>NUCLEOTIDE SEQUENCE [LARGE SCALE GENOMIC DNA]</scope>
</reference>
<reference key="4">
    <citation type="journal article" date="2003" name="EMBO J.">
        <title>Regulation of the Wnt signaling pathway by disabled-2 (Dab2).</title>
        <authorList>
            <person name="Howe P.H."/>
        </authorList>
    </citation>
    <scope>INTERACTION WITH DAB2</scope>
</reference>
<reference key="5">
    <citation type="journal article" date="2004" name="J. Biol. Chem.">
        <title>Independent mutations in mouse Vangl2 that cause neural tube defects in looptail mice impair interaction with members of the Dishevelled family.</title>
        <authorList>
            <person name="Torban E."/>
            <person name="Wang H.-J."/>
            <person name="Groulx N."/>
            <person name="Gros P."/>
        </authorList>
    </citation>
    <scope>INTERACTION WITH VANGL1 AND VANGL2</scope>
</reference>
<reference key="6">
    <citation type="journal article" date="2012" name="Dev. Cell">
        <title>Daam2 is required for dorsal patterning via modulation of canonical Wnt signaling in the developing spinal cord.</title>
        <authorList>
            <person name="Lee H.K."/>
            <person name="Deneen B."/>
        </authorList>
    </citation>
    <scope>FUNCTION</scope>
    <scope>INTERACTION WITH DVL3</scope>
</reference>
<dbReference type="EMBL" id="U41285">
    <property type="protein sequence ID" value="AAB01761.1"/>
    <property type="molecule type" value="mRNA"/>
</dbReference>
<dbReference type="EMBL" id="AC087898">
    <property type="status" value="NOT_ANNOTATED_CDS"/>
    <property type="molecule type" value="Genomic_DNA"/>
</dbReference>
<dbReference type="EMBL" id="CH466521">
    <property type="protein sequence ID" value="EDK97570.1"/>
    <property type="molecule type" value="Genomic_DNA"/>
</dbReference>
<dbReference type="CCDS" id="CCDS37287.1"/>
<dbReference type="RefSeq" id="NP_031915.2">
    <property type="nucleotide sequence ID" value="NM_007889.4"/>
</dbReference>
<dbReference type="SMR" id="Q61062"/>
<dbReference type="BioGRID" id="199344">
    <property type="interactions" value="17"/>
</dbReference>
<dbReference type="CORUM" id="Q61062"/>
<dbReference type="FunCoup" id="Q61062">
    <property type="interactions" value="2841"/>
</dbReference>
<dbReference type="IntAct" id="Q61062">
    <property type="interactions" value="16"/>
</dbReference>
<dbReference type="MINT" id="Q61062"/>
<dbReference type="STRING" id="10090.ENSMUSP00000130925"/>
<dbReference type="iPTMnet" id="Q61062"/>
<dbReference type="PhosphoSitePlus" id="Q61062"/>
<dbReference type="jPOST" id="Q61062"/>
<dbReference type="PaxDb" id="10090-ENSMUSP00000003318"/>
<dbReference type="ProteomicsDB" id="277418"/>
<dbReference type="Pumba" id="Q61062"/>
<dbReference type="Antibodypedia" id="33790">
    <property type="antibodies" value="320 antibodies from 36 providers"/>
</dbReference>
<dbReference type="DNASU" id="13544"/>
<dbReference type="Ensembl" id="ENSMUST00000003318.13">
    <property type="protein sequence ID" value="ENSMUSP00000003318.6"/>
    <property type="gene ID" value="ENSMUSG00000003233.13"/>
</dbReference>
<dbReference type="GeneID" id="13544"/>
<dbReference type="KEGG" id="mmu:13544"/>
<dbReference type="UCSC" id="uc007ypw.1">
    <property type="organism name" value="mouse"/>
</dbReference>
<dbReference type="AGR" id="MGI:108100"/>
<dbReference type="CTD" id="1857"/>
<dbReference type="MGI" id="MGI:108100">
    <property type="gene designation" value="Dvl3"/>
</dbReference>
<dbReference type="VEuPathDB" id="HostDB:ENSMUSG00000003233"/>
<dbReference type="eggNOG" id="KOG3571">
    <property type="taxonomic scope" value="Eukaryota"/>
</dbReference>
<dbReference type="GeneTree" id="ENSGT00950000182903"/>
<dbReference type="HOGENOM" id="CLU_012601_1_0_1"/>
<dbReference type="InParanoid" id="Q61062"/>
<dbReference type="OMA" id="RFEEFHL"/>
<dbReference type="OrthoDB" id="10031689at2759"/>
<dbReference type="TreeFam" id="TF318198"/>
<dbReference type="Reactome" id="R-MMU-201688">
    <property type="pathway name" value="WNT mediated activation of DVL"/>
</dbReference>
<dbReference type="Reactome" id="R-MMU-4086400">
    <property type="pathway name" value="PCP/CE pathway"/>
</dbReference>
<dbReference type="Reactome" id="R-MMU-4641258">
    <property type="pathway name" value="Degradation of DVL"/>
</dbReference>
<dbReference type="Reactome" id="R-MMU-4641262">
    <property type="pathway name" value="Disassembly of the destruction complex and recruitment of AXIN to the membrane"/>
</dbReference>
<dbReference type="Reactome" id="R-MMU-5663220">
    <property type="pathway name" value="RHO GTPases Activate Formins"/>
</dbReference>
<dbReference type="BioGRID-ORCS" id="13544">
    <property type="hits" value="6 hits in 77 CRISPR screens"/>
</dbReference>
<dbReference type="ChiTaRS" id="Dvl3">
    <property type="organism name" value="mouse"/>
</dbReference>
<dbReference type="PRO" id="PR:Q61062"/>
<dbReference type="Proteomes" id="UP000000589">
    <property type="component" value="Chromosome 16"/>
</dbReference>
<dbReference type="RNAct" id="Q61062">
    <property type="molecule type" value="protein"/>
</dbReference>
<dbReference type="Bgee" id="ENSMUSG00000003233">
    <property type="expression patterns" value="Expressed in embryonic brain and 293 other cell types or tissues"/>
</dbReference>
<dbReference type="ExpressionAtlas" id="Q61062">
    <property type="expression patterns" value="baseline and differential"/>
</dbReference>
<dbReference type="GO" id="GO:0005737">
    <property type="term" value="C:cytoplasm"/>
    <property type="evidence" value="ECO:0000314"/>
    <property type="project" value="MGI"/>
</dbReference>
<dbReference type="GO" id="GO:0098978">
    <property type="term" value="C:glutamatergic synapse"/>
    <property type="evidence" value="ECO:0000314"/>
    <property type="project" value="SynGO"/>
</dbReference>
<dbReference type="GO" id="GO:0045202">
    <property type="term" value="C:synapse"/>
    <property type="evidence" value="ECO:0000314"/>
    <property type="project" value="SynGO"/>
</dbReference>
<dbReference type="GO" id="GO:1990909">
    <property type="term" value="C:Wnt signalosome"/>
    <property type="evidence" value="ECO:0000314"/>
    <property type="project" value="ParkinsonsUK-UCL"/>
</dbReference>
<dbReference type="GO" id="GO:0030674">
    <property type="term" value="F:protein-macromolecule adaptor activity"/>
    <property type="evidence" value="ECO:0000314"/>
    <property type="project" value="ParkinsonsUK-UCL"/>
</dbReference>
<dbReference type="GO" id="GO:0060070">
    <property type="term" value="P:canonical Wnt signaling pathway"/>
    <property type="evidence" value="ECO:0000314"/>
    <property type="project" value="ParkinsonsUK-UCL"/>
</dbReference>
<dbReference type="GO" id="GO:0090103">
    <property type="term" value="P:cochlea morphogenesis"/>
    <property type="evidence" value="ECO:0000316"/>
    <property type="project" value="MGI"/>
</dbReference>
<dbReference type="GO" id="GO:0003007">
    <property type="term" value="P:heart morphogenesis"/>
    <property type="evidence" value="ECO:0000316"/>
    <property type="project" value="MGI"/>
</dbReference>
<dbReference type="GO" id="GO:0035556">
    <property type="term" value="P:intracellular signal transduction"/>
    <property type="evidence" value="ECO:0007669"/>
    <property type="project" value="InterPro"/>
</dbReference>
<dbReference type="GO" id="GO:1904948">
    <property type="term" value="P:midbrain dopaminergic neuron differentiation"/>
    <property type="evidence" value="ECO:0000303"/>
    <property type="project" value="ParkinsonsUK-UCL"/>
</dbReference>
<dbReference type="GO" id="GO:0035567">
    <property type="term" value="P:non-canonical Wnt signaling pathway"/>
    <property type="evidence" value="ECO:0000314"/>
    <property type="project" value="BHF-UCL"/>
</dbReference>
<dbReference type="GO" id="GO:0003148">
    <property type="term" value="P:outflow tract septum morphogenesis"/>
    <property type="evidence" value="ECO:0000315"/>
    <property type="project" value="MGI"/>
</dbReference>
<dbReference type="GO" id="GO:0060071">
    <property type="term" value="P:Wnt signaling pathway, planar cell polarity pathway"/>
    <property type="evidence" value="ECO:0000316"/>
    <property type="project" value="MGI"/>
</dbReference>
<dbReference type="CDD" id="cd04438">
    <property type="entry name" value="DEP_dishevelled"/>
    <property type="match status" value="1"/>
</dbReference>
<dbReference type="CDD" id="cd06717">
    <property type="entry name" value="PDZ_Dishevelled-like"/>
    <property type="match status" value="1"/>
</dbReference>
<dbReference type="FunFam" id="2.40.240.130:FF:000001">
    <property type="entry name" value="Segment polarity protein dishevelled homolog DVL-1"/>
    <property type="match status" value="1"/>
</dbReference>
<dbReference type="FunFam" id="2.30.42.10:FF:000014">
    <property type="entry name" value="Segment polarity protein dishevelled homolog DVL-3"/>
    <property type="match status" value="1"/>
</dbReference>
<dbReference type="FunFam" id="1.10.10.10:FF:000040">
    <property type="entry name" value="segment polarity protein dishevelled homolog DVL-3"/>
    <property type="match status" value="1"/>
</dbReference>
<dbReference type="Gene3D" id="2.30.42.10">
    <property type="match status" value="1"/>
</dbReference>
<dbReference type="Gene3D" id="2.40.240.130">
    <property type="match status" value="1"/>
</dbReference>
<dbReference type="Gene3D" id="1.10.10.10">
    <property type="entry name" value="Winged helix-like DNA-binding domain superfamily/Winged helix DNA-binding domain"/>
    <property type="match status" value="1"/>
</dbReference>
<dbReference type="InterPro" id="IPR000591">
    <property type="entry name" value="DEP_dom"/>
</dbReference>
<dbReference type="InterPro" id="IPR024580">
    <property type="entry name" value="Dishevelled_C-dom"/>
</dbReference>
<dbReference type="InterPro" id="IPR008339">
    <property type="entry name" value="Dishevelled_fam"/>
</dbReference>
<dbReference type="InterPro" id="IPR003351">
    <property type="entry name" value="Dishevelled_protein_dom"/>
</dbReference>
<dbReference type="InterPro" id="IPR001158">
    <property type="entry name" value="DIX"/>
</dbReference>
<dbReference type="InterPro" id="IPR038207">
    <property type="entry name" value="DIX_dom_sf"/>
</dbReference>
<dbReference type="InterPro" id="IPR015506">
    <property type="entry name" value="Dsh/Dvl-rel"/>
</dbReference>
<dbReference type="InterPro" id="IPR008342">
    <property type="entry name" value="DVL3"/>
</dbReference>
<dbReference type="InterPro" id="IPR001478">
    <property type="entry name" value="PDZ"/>
</dbReference>
<dbReference type="InterPro" id="IPR036034">
    <property type="entry name" value="PDZ_sf"/>
</dbReference>
<dbReference type="InterPro" id="IPR029071">
    <property type="entry name" value="Ubiquitin-like_domsf"/>
</dbReference>
<dbReference type="InterPro" id="IPR036388">
    <property type="entry name" value="WH-like_DNA-bd_sf"/>
</dbReference>
<dbReference type="InterPro" id="IPR036390">
    <property type="entry name" value="WH_DNA-bd_sf"/>
</dbReference>
<dbReference type="PANTHER" id="PTHR10878">
    <property type="entry name" value="SEGMENT POLARITY PROTEIN DISHEVELLED"/>
    <property type="match status" value="1"/>
</dbReference>
<dbReference type="PANTHER" id="PTHR10878:SF6">
    <property type="entry name" value="SEGMENT POLARITY PROTEIN DISHEVELLED HOMOLOG DVL-3"/>
    <property type="match status" value="1"/>
</dbReference>
<dbReference type="Pfam" id="PF00610">
    <property type="entry name" value="DEP"/>
    <property type="match status" value="1"/>
</dbReference>
<dbReference type="Pfam" id="PF02377">
    <property type="entry name" value="Dishevelled"/>
    <property type="match status" value="1"/>
</dbReference>
<dbReference type="Pfam" id="PF00778">
    <property type="entry name" value="DIX"/>
    <property type="match status" value="1"/>
</dbReference>
<dbReference type="Pfam" id="PF12316">
    <property type="entry name" value="Dsh_C"/>
    <property type="match status" value="1"/>
</dbReference>
<dbReference type="Pfam" id="PF00595">
    <property type="entry name" value="PDZ"/>
    <property type="match status" value="1"/>
</dbReference>
<dbReference type="PRINTS" id="PR01760">
    <property type="entry name" value="DISHEVELLED"/>
</dbReference>
<dbReference type="PRINTS" id="PR01763">
    <property type="entry name" value="DISHEVELLED3"/>
</dbReference>
<dbReference type="SMART" id="SM00021">
    <property type="entry name" value="DAX"/>
    <property type="match status" value="1"/>
</dbReference>
<dbReference type="SMART" id="SM00049">
    <property type="entry name" value="DEP"/>
    <property type="match status" value="1"/>
</dbReference>
<dbReference type="SMART" id="SM00228">
    <property type="entry name" value="PDZ"/>
    <property type="match status" value="1"/>
</dbReference>
<dbReference type="SUPFAM" id="SSF50156">
    <property type="entry name" value="PDZ domain-like"/>
    <property type="match status" value="1"/>
</dbReference>
<dbReference type="SUPFAM" id="SSF54236">
    <property type="entry name" value="Ubiquitin-like"/>
    <property type="match status" value="1"/>
</dbReference>
<dbReference type="SUPFAM" id="SSF46785">
    <property type="entry name" value="Winged helix' DNA-binding domain"/>
    <property type="match status" value="1"/>
</dbReference>
<dbReference type="PROSITE" id="PS50186">
    <property type="entry name" value="DEP"/>
    <property type="match status" value="1"/>
</dbReference>
<dbReference type="PROSITE" id="PS50841">
    <property type="entry name" value="DIX"/>
    <property type="match status" value="1"/>
</dbReference>
<dbReference type="PROSITE" id="PS50106">
    <property type="entry name" value="PDZ"/>
    <property type="match status" value="1"/>
</dbReference>
<organism>
    <name type="scientific">Mus musculus</name>
    <name type="common">Mouse</name>
    <dbReference type="NCBI Taxonomy" id="10090"/>
    <lineage>
        <taxon>Eukaryota</taxon>
        <taxon>Metazoa</taxon>
        <taxon>Chordata</taxon>
        <taxon>Craniata</taxon>
        <taxon>Vertebrata</taxon>
        <taxon>Euteleostomi</taxon>
        <taxon>Mammalia</taxon>
        <taxon>Eutheria</taxon>
        <taxon>Euarchontoglires</taxon>
        <taxon>Glires</taxon>
        <taxon>Rodentia</taxon>
        <taxon>Myomorpha</taxon>
        <taxon>Muroidea</taxon>
        <taxon>Muridae</taxon>
        <taxon>Murinae</taxon>
        <taxon>Mus</taxon>
        <taxon>Mus</taxon>
    </lineage>
</organism>
<keyword id="KW-0963">Cytoplasm</keyword>
<keyword id="KW-0217">Developmental protein</keyword>
<keyword id="KW-0488">Methylation</keyword>
<keyword id="KW-0597">Phosphoprotein</keyword>
<keyword id="KW-1185">Reference proteome</keyword>
<keyword id="KW-0832">Ubl conjugation</keyword>
<keyword id="KW-0879">Wnt signaling pathway</keyword>
<gene>
    <name type="primary">Dvl3</name>
</gene>
<evidence type="ECO:0000250" key="1">
    <source>
        <dbReference type="UniProtKB" id="O14641"/>
    </source>
</evidence>
<evidence type="ECO:0000250" key="2">
    <source>
        <dbReference type="UniProtKB" id="Q92997"/>
    </source>
</evidence>
<evidence type="ECO:0000255" key="3">
    <source>
        <dbReference type="PROSITE-ProRule" id="PRU00066"/>
    </source>
</evidence>
<evidence type="ECO:0000255" key="4">
    <source>
        <dbReference type="PROSITE-ProRule" id="PRU00069"/>
    </source>
</evidence>
<evidence type="ECO:0000255" key="5">
    <source>
        <dbReference type="PROSITE-ProRule" id="PRU00143"/>
    </source>
</evidence>
<evidence type="ECO:0000256" key="6">
    <source>
        <dbReference type="SAM" id="MobiDB-lite"/>
    </source>
</evidence>
<evidence type="ECO:0000269" key="7">
    <source>
    </source>
</evidence>
<evidence type="ECO:0000269" key="8">
    <source>
    </source>
</evidence>
<evidence type="ECO:0000269" key="9">
    <source>
    </source>
</evidence>
<evidence type="ECO:0000305" key="10"/>
<proteinExistence type="evidence at protein level"/>
<sequence>MGETKIIYHLDGQETPYLVKLPLPAERVTLADFKGVLQRPSYKFFFKSMDDDFGVVKEEISDDNAKLPCFNGRVVSWLVSAEGSHPEPAPFCADNPSELPPSMERTGGIGDSRPPSFHPHASGGSQENLDNDTETDSLVSAQRERPRRRDGPEHAARLNGTTKGERRREPGGYDSSSTLMSSELETTSFFDSDEDDSTSRFSSSTEQSSASRLMRRHKRRRRKQKVSRIERSSSFSSITDSTMSLNIITVTLNMEKYNFLGISIVGQSNERGDGGIYIGSIMKGGAVAADGRIEPGDMLLQVNEINFENMSNDDAVRVLREIVHKPGPITLTVAKCWDPSPRGCFTLPRSEPIRPIDPAAWVSHTAAMTGTFPAYGMSPSLSTITSTSSSITSSIPDTERLDDFHLSIHSDMAAIVKAMASPESGLEVRDRMWLKITIPNAFIGSDVVDWLYHNVEGFTDRREARKYASNLLKAGFIRHTVNKITFSEQCYYIFGDLCGNMANLSLHDHDGSSGASDQDTLAPLPHPGAAPWPMAFPYQYPPPPHPYNPHPGFPELGYSYGGGSASSQHSEGSRSSGSNRSGSDRRKEKDPKAGDSKSGGSGSESDHTTRSSLRGPRERAPSERSGPAASEHSHRSHHSLTSSLRSHHTHPSYGPPGVPPLYGPPMLMMTPPPAAMGPPGAPPGRDLASVPPELTASRQSFRMAMGNPSEFFVDVM</sequence>
<name>DVL3_MOUSE</name>
<feature type="chain" id="PRO_0000145750" description="Segment polarity protein dishevelled homolog DVL-3">
    <location>
        <begin position="1"/>
        <end position="716"/>
    </location>
</feature>
<feature type="domain" description="DIX" evidence="4">
    <location>
        <begin position="1"/>
        <end position="82"/>
    </location>
</feature>
<feature type="domain" description="PDZ" evidence="5">
    <location>
        <begin position="249"/>
        <end position="321"/>
    </location>
</feature>
<feature type="domain" description="DEP" evidence="3">
    <location>
        <begin position="422"/>
        <end position="496"/>
    </location>
</feature>
<feature type="region of interest" description="Disordered" evidence="6">
    <location>
        <begin position="85"/>
        <end position="235"/>
    </location>
</feature>
<feature type="region of interest" description="Disordered" evidence="6">
    <location>
        <begin position="546"/>
        <end position="691"/>
    </location>
</feature>
<feature type="compositionally biased region" description="Basic and acidic residues" evidence="6">
    <location>
        <begin position="142"/>
        <end position="156"/>
    </location>
</feature>
<feature type="compositionally biased region" description="Low complexity" evidence="6">
    <location>
        <begin position="175"/>
        <end position="190"/>
    </location>
</feature>
<feature type="compositionally biased region" description="Low complexity" evidence="6">
    <location>
        <begin position="199"/>
        <end position="212"/>
    </location>
</feature>
<feature type="compositionally biased region" description="Basic residues" evidence="6">
    <location>
        <begin position="213"/>
        <end position="226"/>
    </location>
</feature>
<feature type="compositionally biased region" description="Low complexity" evidence="6">
    <location>
        <begin position="565"/>
        <end position="581"/>
    </location>
</feature>
<feature type="compositionally biased region" description="Basic and acidic residues" evidence="6">
    <location>
        <begin position="582"/>
        <end position="595"/>
    </location>
</feature>
<feature type="compositionally biased region" description="Basic and acidic residues" evidence="6">
    <location>
        <begin position="604"/>
        <end position="622"/>
    </location>
</feature>
<feature type="compositionally biased region" description="Pro residues" evidence="6">
    <location>
        <begin position="653"/>
        <end position="663"/>
    </location>
</feature>
<feature type="compositionally biased region" description="Pro residues" evidence="6">
    <location>
        <begin position="670"/>
        <end position="682"/>
    </location>
</feature>
<feature type="modified residue" description="Omega-N-methylarginine" evidence="2">
    <location>
        <position position="27"/>
    </location>
</feature>
<feature type="modified residue" description="Phosphoserine" evidence="2">
    <location>
        <position position="48"/>
    </location>
</feature>
<feature type="modified residue" description="Phosphoserine" evidence="2">
    <location>
        <position position="125"/>
    </location>
</feature>
<feature type="modified residue" description="Phosphoserine" evidence="2">
    <location>
        <position position="192"/>
    </location>
</feature>
<feature type="modified residue" description="Omega-N-methylarginine" evidence="2">
    <location>
        <position position="212"/>
    </location>
</feature>
<feature type="modified residue" description="Asymmetric dimethylarginine; by PRMT1; alternate" evidence="2">
    <location>
        <position position="271"/>
    </location>
</feature>
<feature type="modified residue" description="Symmetric dimethylarginine; by PRMT7; alternate" evidence="2">
    <location>
        <position position="271"/>
    </location>
</feature>
<feature type="modified residue" description="Omega-N-methylarginine; alternate" evidence="2">
    <location>
        <position position="342"/>
    </location>
</feature>
<feature type="modified residue" description="Symmetric dimethylarginine; by PRMT7; alternate" evidence="2">
    <location>
        <position position="342"/>
    </location>
</feature>
<feature type="modified residue" description="Phosphothreonine" evidence="2">
    <location>
        <position position="346"/>
    </location>
</feature>
<feature type="modified residue" description="Symmetric dimethylarginine; by PRMT7" evidence="2">
    <location>
        <position position="614"/>
    </location>
</feature>
<feature type="modified residue" description="Phosphoserine" evidence="2">
    <location>
        <position position="697"/>
    </location>
</feature>
<feature type="modified residue" description="Dimethylated arginine; alternate" evidence="2">
    <location>
        <position position="698"/>
    </location>
</feature>
<feature type="modified residue" description="Omega-N-methylarginine; alternate" evidence="2">
    <location>
        <position position="698"/>
    </location>
</feature>
<feature type="modified residue" description="Phosphoserine" evidence="2">
    <location>
        <position position="700"/>
    </location>
</feature>
<feature type="sequence conflict" description="In Ref. 1; AAB01761." evidence="10" ref="1">
    <original>D</original>
    <variation>E</variation>
    <location>
        <position position="460"/>
    </location>
</feature>
<feature type="sequence conflict" description="In Ref. 1; AAB01761." evidence="10" ref="1">
    <original>A</original>
    <variation>G</variation>
    <location>
        <position position="674"/>
    </location>
</feature>
<comment type="function">
    <text evidence="9">Involved in the signal transduction pathway mediated by multiple Wnt genes.</text>
</comment>
<comment type="subunit">
    <text evidence="2 7 8 9">Interacts (via the PDZ domain) with the C-terminal regions of VANGL1 and VANGL2. Interacts (via the region containing both the PDZ and DEP domains) with LRRFIP2; the DIX domain may inhibit this interaction. Interacts with CYLD. Interacts with CEP164 and DAB2. Interacts with DCDC2. Interacts with FOXK1 and FOXK2 (By similarity). Interacts with DAAM2 (PubMed:22227309).</text>
</comment>
<comment type="interaction">
    <interactant intactId="EBI-1538450">
        <id>Q61062</id>
    </interactant>
    <interactant intactId="EBI-2365912">
        <id>O35625</id>
        <label>Axin1</label>
    </interactant>
    <organismsDiffer>false</organismsDiffer>
    <experiments>2</experiments>
</comment>
<comment type="interaction">
    <interactant intactId="EBI-1538450">
        <id>Q61062</id>
    </interactant>
    <interactant intactId="EBI-641940">
        <id>Q60838</id>
        <label>Dvl2</label>
    </interactant>
    <organismsDiffer>false</organismsDiffer>
    <experiments>3</experiments>
</comment>
<comment type="interaction">
    <interactant intactId="EBI-1538450">
        <id>Q61062</id>
    </interactant>
    <interactant intactId="EBI-1750708">
        <id>Q80Z96</id>
        <label>Vangl1</label>
    </interactant>
    <organismsDiffer>false</organismsDiffer>
    <experiments>2</experiments>
</comment>
<comment type="interaction">
    <interactant intactId="EBI-1538450">
        <id>Q61062</id>
    </interactant>
    <interactant intactId="EBI-1750744">
        <id>Q91ZD4</id>
        <label>Vangl2</label>
    </interactant>
    <organismsDiffer>false</organismsDiffer>
    <experiments>2</experiments>
</comment>
<comment type="subcellular location">
    <subcellularLocation>
        <location evidence="1">Cytoplasm</location>
    </subcellularLocation>
</comment>
<comment type="tissue specificity">
    <text>Ubiquitous.</text>
</comment>
<comment type="PTM">
    <text evidence="2">Ubiquitinated. Deubiquitinated by CYLD, which acts on 'Lys-63'-linked ubiquitin chains (By similarity).</text>
</comment>
<comment type="PTM">
    <text evidence="2">Phosphorylated by CSNK1D.</text>
</comment>
<comment type="PTM">
    <text evidence="2">Arginine methylation may function as a switch in regulation of function in Wnt signaling.</text>
</comment>
<comment type="similarity">
    <text evidence="10">Belongs to the DSH family.</text>
</comment>